<sequence length="63" mass="7185">MNNKINNIKITQIKSAIGCKYDQRFTLIGLGLNKINKSVILKNTNSIRGMVEKVKHLLKIENM</sequence>
<organism>
    <name type="scientific">Rickettsia prowazekii (strain Madrid E)</name>
    <dbReference type="NCBI Taxonomy" id="272947"/>
    <lineage>
        <taxon>Bacteria</taxon>
        <taxon>Pseudomonadati</taxon>
        <taxon>Pseudomonadota</taxon>
        <taxon>Alphaproteobacteria</taxon>
        <taxon>Rickettsiales</taxon>
        <taxon>Rickettsiaceae</taxon>
        <taxon>Rickettsieae</taxon>
        <taxon>Rickettsia</taxon>
        <taxon>typhus group</taxon>
    </lineage>
</organism>
<gene>
    <name evidence="1" type="primary">rpmD</name>
    <name type="ordered locus">RP641</name>
</gene>
<feature type="chain" id="PRO_0000104601" description="Large ribosomal subunit protein uL30">
    <location>
        <begin position="1"/>
        <end position="63"/>
    </location>
</feature>
<dbReference type="EMBL" id="AJ235272">
    <property type="protein sequence ID" value="CAA15081.1"/>
    <property type="molecule type" value="Genomic_DNA"/>
</dbReference>
<dbReference type="PIR" id="G71669">
    <property type="entry name" value="G71669"/>
</dbReference>
<dbReference type="RefSeq" id="NP_221005.1">
    <property type="nucleotide sequence ID" value="NC_000963.1"/>
</dbReference>
<dbReference type="RefSeq" id="WP_004596229.1">
    <property type="nucleotide sequence ID" value="NC_000963.1"/>
</dbReference>
<dbReference type="SMR" id="Q9ZCS3"/>
<dbReference type="STRING" id="272947.gene:17555718"/>
<dbReference type="EnsemblBacteria" id="CAA15081">
    <property type="protein sequence ID" value="CAA15081"/>
    <property type="gene ID" value="CAA15081"/>
</dbReference>
<dbReference type="GeneID" id="57569766"/>
<dbReference type="KEGG" id="rpr:RP641"/>
<dbReference type="PATRIC" id="fig|272947.5.peg.663"/>
<dbReference type="eggNOG" id="COG1841">
    <property type="taxonomic scope" value="Bacteria"/>
</dbReference>
<dbReference type="HOGENOM" id="CLU_131047_1_5_5"/>
<dbReference type="OrthoDB" id="9812790at2"/>
<dbReference type="Proteomes" id="UP000002480">
    <property type="component" value="Chromosome"/>
</dbReference>
<dbReference type="GO" id="GO:0022625">
    <property type="term" value="C:cytosolic large ribosomal subunit"/>
    <property type="evidence" value="ECO:0007669"/>
    <property type="project" value="TreeGrafter"/>
</dbReference>
<dbReference type="GO" id="GO:0003735">
    <property type="term" value="F:structural constituent of ribosome"/>
    <property type="evidence" value="ECO:0007669"/>
    <property type="project" value="InterPro"/>
</dbReference>
<dbReference type="GO" id="GO:0006412">
    <property type="term" value="P:translation"/>
    <property type="evidence" value="ECO:0007669"/>
    <property type="project" value="UniProtKB-UniRule"/>
</dbReference>
<dbReference type="CDD" id="cd01658">
    <property type="entry name" value="Ribosomal_L30"/>
    <property type="match status" value="1"/>
</dbReference>
<dbReference type="Gene3D" id="3.30.1390.20">
    <property type="entry name" value="Ribosomal protein L30, ferredoxin-like fold domain"/>
    <property type="match status" value="1"/>
</dbReference>
<dbReference type="HAMAP" id="MF_01371_B">
    <property type="entry name" value="Ribosomal_uL30_B"/>
    <property type="match status" value="1"/>
</dbReference>
<dbReference type="InterPro" id="IPR036919">
    <property type="entry name" value="Ribo_uL30_ferredoxin-like_sf"/>
</dbReference>
<dbReference type="InterPro" id="IPR005996">
    <property type="entry name" value="Ribosomal_uL30_bac-type"/>
</dbReference>
<dbReference type="InterPro" id="IPR016082">
    <property type="entry name" value="Ribosomal_uL30_ferredoxin-like"/>
</dbReference>
<dbReference type="NCBIfam" id="TIGR01308">
    <property type="entry name" value="rpmD_bact"/>
    <property type="match status" value="1"/>
</dbReference>
<dbReference type="PANTHER" id="PTHR15892:SF2">
    <property type="entry name" value="LARGE RIBOSOMAL SUBUNIT PROTEIN UL30M"/>
    <property type="match status" value="1"/>
</dbReference>
<dbReference type="PANTHER" id="PTHR15892">
    <property type="entry name" value="MITOCHONDRIAL RIBOSOMAL PROTEIN L30"/>
    <property type="match status" value="1"/>
</dbReference>
<dbReference type="Pfam" id="PF00327">
    <property type="entry name" value="Ribosomal_L30"/>
    <property type="match status" value="1"/>
</dbReference>
<dbReference type="PIRSF" id="PIRSF002211">
    <property type="entry name" value="Ribosomal_L30_bac-type"/>
    <property type="match status" value="1"/>
</dbReference>
<dbReference type="SUPFAM" id="SSF55129">
    <property type="entry name" value="Ribosomal protein L30p/L7e"/>
    <property type="match status" value="1"/>
</dbReference>
<evidence type="ECO:0000255" key="1">
    <source>
        <dbReference type="HAMAP-Rule" id="MF_01371"/>
    </source>
</evidence>
<evidence type="ECO:0000305" key="2"/>
<comment type="subunit">
    <text evidence="1">Part of the 50S ribosomal subunit.</text>
</comment>
<comment type="similarity">
    <text evidence="1">Belongs to the universal ribosomal protein uL30 family.</text>
</comment>
<accession>Q9ZCS3</accession>
<reference key="1">
    <citation type="journal article" date="1998" name="Nature">
        <title>The genome sequence of Rickettsia prowazekii and the origin of mitochondria.</title>
        <authorList>
            <person name="Andersson S.G.E."/>
            <person name="Zomorodipour A."/>
            <person name="Andersson J.O."/>
            <person name="Sicheritz-Ponten T."/>
            <person name="Alsmark U.C.M."/>
            <person name="Podowski R.M."/>
            <person name="Naeslund A.K."/>
            <person name="Eriksson A.-S."/>
            <person name="Winkler H.H."/>
            <person name="Kurland C.G."/>
        </authorList>
    </citation>
    <scope>NUCLEOTIDE SEQUENCE [LARGE SCALE GENOMIC DNA]</scope>
    <source>
        <strain>Madrid E</strain>
    </source>
</reference>
<protein>
    <recommendedName>
        <fullName evidence="1">Large ribosomal subunit protein uL30</fullName>
    </recommendedName>
    <alternativeName>
        <fullName evidence="2">50S ribosomal protein L30</fullName>
    </alternativeName>
</protein>
<proteinExistence type="inferred from homology"/>
<keyword id="KW-1185">Reference proteome</keyword>
<keyword id="KW-0687">Ribonucleoprotein</keyword>
<keyword id="KW-0689">Ribosomal protein</keyword>
<name>RL30_RICPR</name>